<name>TRUB_STAAB</name>
<feature type="chain" id="PRO_0000229384" description="tRNA pseudouridine synthase B">
    <location>
        <begin position="1"/>
        <end position="305"/>
    </location>
</feature>
<feature type="active site" description="Nucleophile" evidence="1">
    <location>
        <position position="39"/>
    </location>
</feature>
<dbReference type="EC" id="5.4.99.25" evidence="1"/>
<dbReference type="EMBL" id="AJ938182">
    <property type="protein sequence ID" value="CAI80822.1"/>
    <property type="molecule type" value="Genomic_DNA"/>
</dbReference>
<dbReference type="RefSeq" id="WP_000282290.1">
    <property type="nucleotide sequence ID" value="NC_007622.1"/>
</dbReference>
<dbReference type="SMR" id="Q2YXP5"/>
<dbReference type="KEGG" id="sab:SAB1133"/>
<dbReference type="HOGENOM" id="CLU_032087_0_1_9"/>
<dbReference type="GO" id="GO:0003723">
    <property type="term" value="F:RNA binding"/>
    <property type="evidence" value="ECO:0007669"/>
    <property type="project" value="InterPro"/>
</dbReference>
<dbReference type="GO" id="GO:0160148">
    <property type="term" value="F:tRNA pseudouridine(55) synthase activity"/>
    <property type="evidence" value="ECO:0007669"/>
    <property type="project" value="UniProtKB-EC"/>
</dbReference>
<dbReference type="GO" id="GO:1990481">
    <property type="term" value="P:mRNA pseudouridine synthesis"/>
    <property type="evidence" value="ECO:0007669"/>
    <property type="project" value="TreeGrafter"/>
</dbReference>
<dbReference type="GO" id="GO:0031119">
    <property type="term" value="P:tRNA pseudouridine synthesis"/>
    <property type="evidence" value="ECO:0007669"/>
    <property type="project" value="UniProtKB-UniRule"/>
</dbReference>
<dbReference type="CDD" id="cd02573">
    <property type="entry name" value="PseudoU_synth_EcTruB"/>
    <property type="match status" value="1"/>
</dbReference>
<dbReference type="FunFam" id="3.30.2350.10:FF:000011">
    <property type="entry name" value="tRNA pseudouridine synthase B"/>
    <property type="match status" value="1"/>
</dbReference>
<dbReference type="Gene3D" id="3.30.2350.10">
    <property type="entry name" value="Pseudouridine synthase"/>
    <property type="match status" value="1"/>
</dbReference>
<dbReference type="HAMAP" id="MF_01080">
    <property type="entry name" value="TruB_bact"/>
    <property type="match status" value="1"/>
</dbReference>
<dbReference type="InterPro" id="IPR020103">
    <property type="entry name" value="PsdUridine_synth_cat_dom_sf"/>
</dbReference>
<dbReference type="InterPro" id="IPR002501">
    <property type="entry name" value="PsdUridine_synth_N"/>
</dbReference>
<dbReference type="InterPro" id="IPR014780">
    <property type="entry name" value="tRNA_psdUridine_synth_TruB"/>
</dbReference>
<dbReference type="InterPro" id="IPR032819">
    <property type="entry name" value="TruB_C"/>
</dbReference>
<dbReference type="NCBIfam" id="TIGR00431">
    <property type="entry name" value="TruB"/>
    <property type="match status" value="1"/>
</dbReference>
<dbReference type="PANTHER" id="PTHR13767:SF2">
    <property type="entry name" value="PSEUDOURIDYLATE SYNTHASE TRUB1"/>
    <property type="match status" value="1"/>
</dbReference>
<dbReference type="PANTHER" id="PTHR13767">
    <property type="entry name" value="TRNA-PSEUDOURIDINE SYNTHASE"/>
    <property type="match status" value="1"/>
</dbReference>
<dbReference type="Pfam" id="PF16198">
    <property type="entry name" value="TruB_C_2"/>
    <property type="match status" value="1"/>
</dbReference>
<dbReference type="Pfam" id="PF01509">
    <property type="entry name" value="TruB_N"/>
    <property type="match status" value="1"/>
</dbReference>
<dbReference type="SUPFAM" id="SSF55120">
    <property type="entry name" value="Pseudouridine synthase"/>
    <property type="match status" value="1"/>
</dbReference>
<accession>Q2YXP5</accession>
<keyword id="KW-0413">Isomerase</keyword>
<keyword id="KW-0819">tRNA processing</keyword>
<sequence length="305" mass="34635">MYNGILPVYKERGLTSHDVVFKLRKILKTKKIGHTGTLDPEVAGVLPVCIGNATRVSDYVMDMGKAYEANVSIGRSTTTEDQTGDTLEMKGVHSADFNNDDIDRLLENFKGVIEQIPPMYSSVKVNGKKLYEYARNNETVERPKRKVNIKDIGRISELDFKENECHFKIRVICGKGTYIRTLATDIGVKLGFPAHMSKLTRIESGGFVLKDSLTLEQIKELHEQDSLQNKLFPLEYGLKGLPSIKIKDSHIKKRILNGQKFNKNEFDNKIKDQIVFIDDDSEKVLAIYMVHPTKESEIKPKKVFN</sequence>
<proteinExistence type="inferred from homology"/>
<organism>
    <name type="scientific">Staphylococcus aureus (strain bovine RF122 / ET3-1)</name>
    <dbReference type="NCBI Taxonomy" id="273036"/>
    <lineage>
        <taxon>Bacteria</taxon>
        <taxon>Bacillati</taxon>
        <taxon>Bacillota</taxon>
        <taxon>Bacilli</taxon>
        <taxon>Bacillales</taxon>
        <taxon>Staphylococcaceae</taxon>
        <taxon>Staphylococcus</taxon>
    </lineage>
</organism>
<evidence type="ECO:0000255" key="1">
    <source>
        <dbReference type="HAMAP-Rule" id="MF_01080"/>
    </source>
</evidence>
<protein>
    <recommendedName>
        <fullName evidence="1">tRNA pseudouridine synthase B</fullName>
        <ecNumber evidence="1">5.4.99.25</ecNumber>
    </recommendedName>
    <alternativeName>
        <fullName evidence="1">tRNA pseudouridine(55) synthase</fullName>
        <shortName evidence="1">Psi55 synthase</shortName>
    </alternativeName>
    <alternativeName>
        <fullName evidence="1">tRNA pseudouridylate synthase</fullName>
    </alternativeName>
    <alternativeName>
        <fullName evidence="1">tRNA-uridine isomerase</fullName>
    </alternativeName>
</protein>
<comment type="function">
    <text evidence="1">Responsible for synthesis of pseudouridine from uracil-55 in the psi GC loop of transfer RNAs.</text>
</comment>
<comment type="catalytic activity">
    <reaction evidence="1">
        <text>uridine(55) in tRNA = pseudouridine(55) in tRNA</text>
        <dbReference type="Rhea" id="RHEA:42532"/>
        <dbReference type="Rhea" id="RHEA-COMP:10101"/>
        <dbReference type="Rhea" id="RHEA-COMP:10102"/>
        <dbReference type="ChEBI" id="CHEBI:65314"/>
        <dbReference type="ChEBI" id="CHEBI:65315"/>
        <dbReference type="EC" id="5.4.99.25"/>
    </reaction>
</comment>
<comment type="similarity">
    <text evidence="1">Belongs to the pseudouridine synthase TruB family. Type 1 subfamily.</text>
</comment>
<gene>
    <name evidence="1" type="primary">truB</name>
    <name type="ordered locus">SAB1133</name>
</gene>
<reference key="1">
    <citation type="journal article" date="2007" name="PLoS ONE">
        <title>Molecular correlates of host specialization in Staphylococcus aureus.</title>
        <authorList>
            <person name="Herron-Olson L."/>
            <person name="Fitzgerald J.R."/>
            <person name="Musser J.M."/>
            <person name="Kapur V."/>
        </authorList>
    </citation>
    <scope>NUCLEOTIDE SEQUENCE [LARGE SCALE GENOMIC DNA]</scope>
    <source>
        <strain>bovine RF122 / ET3-1</strain>
    </source>
</reference>